<organism>
    <name type="scientific">Clostridium beijerinckii (strain ATCC 51743 / NCIMB 8052)</name>
    <name type="common">Clostridium acetobutylicum</name>
    <dbReference type="NCBI Taxonomy" id="290402"/>
    <lineage>
        <taxon>Bacteria</taxon>
        <taxon>Bacillati</taxon>
        <taxon>Bacillota</taxon>
        <taxon>Clostridia</taxon>
        <taxon>Eubacteriales</taxon>
        <taxon>Clostridiaceae</taxon>
        <taxon>Clostridium</taxon>
    </lineage>
</organism>
<gene>
    <name evidence="1" type="primary">aroB</name>
    <name type="ordered locus">Cbei_4576</name>
</gene>
<proteinExistence type="inferred from homology"/>
<dbReference type="EC" id="4.2.3.4" evidence="1"/>
<dbReference type="EMBL" id="CP000721">
    <property type="protein sequence ID" value="ABR36685.1"/>
    <property type="molecule type" value="Genomic_DNA"/>
</dbReference>
<dbReference type="RefSeq" id="WP_012060732.1">
    <property type="nucleotide sequence ID" value="NC_009617.1"/>
</dbReference>
<dbReference type="SMR" id="A6M255"/>
<dbReference type="KEGG" id="cbe:Cbei_4576"/>
<dbReference type="eggNOG" id="COG0337">
    <property type="taxonomic scope" value="Bacteria"/>
</dbReference>
<dbReference type="HOGENOM" id="CLU_001201_0_1_9"/>
<dbReference type="UniPathway" id="UPA00053">
    <property type="reaction ID" value="UER00085"/>
</dbReference>
<dbReference type="Proteomes" id="UP000000565">
    <property type="component" value="Chromosome"/>
</dbReference>
<dbReference type="GO" id="GO:0005737">
    <property type="term" value="C:cytoplasm"/>
    <property type="evidence" value="ECO:0007669"/>
    <property type="project" value="UniProtKB-SubCell"/>
</dbReference>
<dbReference type="GO" id="GO:0003856">
    <property type="term" value="F:3-dehydroquinate synthase activity"/>
    <property type="evidence" value="ECO:0007669"/>
    <property type="project" value="UniProtKB-UniRule"/>
</dbReference>
<dbReference type="GO" id="GO:0046872">
    <property type="term" value="F:metal ion binding"/>
    <property type="evidence" value="ECO:0007669"/>
    <property type="project" value="UniProtKB-KW"/>
</dbReference>
<dbReference type="GO" id="GO:0000166">
    <property type="term" value="F:nucleotide binding"/>
    <property type="evidence" value="ECO:0007669"/>
    <property type="project" value="UniProtKB-KW"/>
</dbReference>
<dbReference type="GO" id="GO:0008652">
    <property type="term" value="P:amino acid biosynthetic process"/>
    <property type="evidence" value="ECO:0007669"/>
    <property type="project" value="UniProtKB-KW"/>
</dbReference>
<dbReference type="GO" id="GO:0009073">
    <property type="term" value="P:aromatic amino acid family biosynthetic process"/>
    <property type="evidence" value="ECO:0007669"/>
    <property type="project" value="UniProtKB-KW"/>
</dbReference>
<dbReference type="GO" id="GO:0009423">
    <property type="term" value="P:chorismate biosynthetic process"/>
    <property type="evidence" value="ECO:0007669"/>
    <property type="project" value="UniProtKB-UniRule"/>
</dbReference>
<dbReference type="CDD" id="cd08195">
    <property type="entry name" value="DHQS"/>
    <property type="match status" value="1"/>
</dbReference>
<dbReference type="FunFam" id="3.40.50.1970:FF:000007">
    <property type="entry name" value="Pentafunctional AROM polypeptide"/>
    <property type="match status" value="1"/>
</dbReference>
<dbReference type="Gene3D" id="3.40.50.1970">
    <property type="match status" value="1"/>
</dbReference>
<dbReference type="Gene3D" id="1.20.1090.10">
    <property type="entry name" value="Dehydroquinate synthase-like - alpha domain"/>
    <property type="match status" value="1"/>
</dbReference>
<dbReference type="HAMAP" id="MF_00110">
    <property type="entry name" value="DHQ_synthase"/>
    <property type="match status" value="1"/>
</dbReference>
<dbReference type="InterPro" id="IPR050071">
    <property type="entry name" value="Dehydroquinate_synthase"/>
</dbReference>
<dbReference type="InterPro" id="IPR016037">
    <property type="entry name" value="DHQ_synth_AroB"/>
</dbReference>
<dbReference type="InterPro" id="IPR030963">
    <property type="entry name" value="DHQ_synth_fam"/>
</dbReference>
<dbReference type="InterPro" id="IPR030960">
    <property type="entry name" value="DHQS/DOIS_N"/>
</dbReference>
<dbReference type="InterPro" id="IPR056179">
    <property type="entry name" value="DHQS_C"/>
</dbReference>
<dbReference type="NCBIfam" id="TIGR01357">
    <property type="entry name" value="aroB"/>
    <property type="match status" value="1"/>
</dbReference>
<dbReference type="PANTHER" id="PTHR43622">
    <property type="entry name" value="3-DEHYDROQUINATE SYNTHASE"/>
    <property type="match status" value="1"/>
</dbReference>
<dbReference type="PANTHER" id="PTHR43622:SF7">
    <property type="entry name" value="3-DEHYDROQUINATE SYNTHASE, CHLOROPLASTIC"/>
    <property type="match status" value="1"/>
</dbReference>
<dbReference type="Pfam" id="PF01761">
    <property type="entry name" value="DHQ_synthase"/>
    <property type="match status" value="1"/>
</dbReference>
<dbReference type="Pfam" id="PF24621">
    <property type="entry name" value="DHQS_C"/>
    <property type="match status" value="1"/>
</dbReference>
<dbReference type="PIRSF" id="PIRSF001455">
    <property type="entry name" value="DHQ_synth"/>
    <property type="match status" value="1"/>
</dbReference>
<dbReference type="SUPFAM" id="SSF56796">
    <property type="entry name" value="Dehydroquinate synthase-like"/>
    <property type="match status" value="1"/>
</dbReference>
<comment type="function">
    <text evidence="1">Catalyzes the conversion of 3-deoxy-D-arabino-heptulosonate 7-phosphate (DAHP) to dehydroquinate (DHQ).</text>
</comment>
<comment type="catalytic activity">
    <reaction evidence="1">
        <text>7-phospho-2-dehydro-3-deoxy-D-arabino-heptonate = 3-dehydroquinate + phosphate</text>
        <dbReference type="Rhea" id="RHEA:21968"/>
        <dbReference type="ChEBI" id="CHEBI:32364"/>
        <dbReference type="ChEBI" id="CHEBI:43474"/>
        <dbReference type="ChEBI" id="CHEBI:58394"/>
        <dbReference type="EC" id="4.2.3.4"/>
    </reaction>
</comment>
<comment type="cofactor">
    <cofactor evidence="1">
        <name>Co(2+)</name>
        <dbReference type="ChEBI" id="CHEBI:48828"/>
    </cofactor>
    <cofactor evidence="1">
        <name>Zn(2+)</name>
        <dbReference type="ChEBI" id="CHEBI:29105"/>
    </cofactor>
    <text evidence="1">Binds 1 divalent metal cation per subunit. Can use either Co(2+) or Zn(2+).</text>
</comment>
<comment type="cofactor">
    <cofactor evidence="1">
        <name>NAD(+)</name>
        <dbReference type="ChEBI" id="CHEBI:57540"/>
    </cofactor>
</comment>
<comment type="pathway">
    <text evidence="1">Metabolic intermediate biosynthesis; chorismate biosynthesis; chorismate from D-erythrose 4-phosphate and phosphoenolpyruvate: step 2/7.</text>
</comment>
<comment type="subcellular location">
    <subcellularLocation>
        <location evidence="1">Cytoplasm</location>
    </subcellularLocation>
</comment>
<comment type="similarity">
    <text evidence="1">Belongs to the sugar phosphate cyclases superfamily. Dehydroquinate synthase family.</text>
</comment>
<name>AROB_CLOB8</name>
<evidence type="ECO:0000255" key="1">
    <source>
        <dbReference type="HAMAP-Rule" id="MF_00110"/>
    </source>
</evidence>
<reference key="1">
    <citation type="submission" date="2007-06" db="EMBL/GenBank/DDBJ databases">
        <title>Complete sequence of Clostridium beijerinckii NCIMB 8052.</title>
        <authorList>
            <consortium name="US DOE Joint Genome Institute"/>
            <person name="Copeland A."/>
            <person name="Lucas S."/>
            <person name="Lapidus A."/>
            <person name="Barry K."/>
            <person name="Detter J.C."/>
            <person name="Glavina del Rio T."/>
            <person name="Hammon N."/>
            <person name="Israni S."/>
            <person name="Dalin E."/>
            <person name="Tice H."/>
            <person name="Pitluck S."/>
            <person name="Sims D."/>
            <person name="Brettin T."/>
            <person name="Bruce D."/>
            <person name="Tapia R."/>
            <person name="Brainard J."/>
            <person name="Schmutz J."/>
            <person name="Larimer F."/>
            <person name="Land M."/>
            <person name="Hauser L."/>
            <person name="Kyrpides N."/>
            <person name="Mikhailova N."/>
            <person name="Bennet G."/>
            <person name="Cann I."/>
            <person name="Chen J.-S."/>
            <person name="Contreras A.L."/>
            <person name="Jones D."/>
            <person name="Kashket E."/>
            <person name="Mitchell W."/>
            <person name="Stoddard S."/>
            <person name="Schwarz W."/>
            <person name="Qureshi N."/>
            <person name="Young M."/>
            <person name="Shi Z."/>
            <person name="Ezeji T."/>
            <person name="White B."/>
            <person name="Blaschek H."/>
            <person name="Richardson P."/>
        </authorList>
    </citation>
    <scope>NUCLEOTIDE SEQUENCE [LARGE SCALE GENOMIC DNA]</scope>
    <source>
        <strain>ATCC 51743 / NCIMB 8052</strain>
    </source>
</reference>
<sequence length="350" mass="39509">MEDLVVELGERSYPIIIKKGLINEVNLEIQKVFKGKKIFILTDKNVGSHYGDRIKSCLIKSGYDVKLMELEPGEETKAFSTLPLIYNELLDFKITRSDLIITLGGGVIGDLGGFAASTFLRGVDFVQIPTSLLAQVDSSVGGKVAVDLERGKNLVGSFYHPKLVLIDPNVLETLSERFFRDGMAEVIKYGCIKDKEFFYFLKSLKNKEEVMNNIEKIIHKCCFIKKCVVENDEKDTGERMLLNFGHTLGHAIETYYNFKKFTHGEAVAIGMYEISKIAENKGLTDQGVSEEIREILVQYNLPYEVEIDDSSEVLDTIALDKKNIDNVLKVVLLRNIGESYLEKTNVEFFS</sequence>
<accession>A6M255</accession>
<protein>
    <recommendedName>
        <fullName evidence="1">3-dehydroquinate synthase</fullName>
        <shortName evidence="1">DHQS</shortName>
        <ecNumber evidence="1">4.2.3.4</ecNumber>
    </recommendedName>
</protein>
<keyword id="KW-0028">Amino-acid biosynthesis</keyword>
<keyword id="KW-0057">Aromatic amino acid biosynthesis</keyword>
<keyword id="KW-0170">Cobalt</keyword>
<keyword id="KW-0963">Cytoplasm</keyword>
<keyword id="KW-0456">Lyase</keyword>
<keyword id="KW-0479">Metal-binding</keyword>
<keyword id="KW-0520">NAD</keyword>
<keyword id="KW-0547">Nucleotide-binding</keyword>
<keyword id="KW-0862">Zinc</keyword>
<feature type="chain" id="PRO_1000094489" description="3-dehydroquinate synthase">
    <location>
        <begin position="1"/>
        <end position="350"/>
    </location>
</feature>
<feature type="binding site" evidence="1">
    <location>
        <begin position="106"/>
        <end position="110"/>
    </location>
    <ligand>
        <name>NAD(+)</name>
        <dbReference type="ChEBI" id="CHEBI:57540"/>
    </ligand>
</feature>
<feature type="binding site" evidence="1">
    <location>
        <begin position="130"/>
        <end position="131"/>
    </location>
    <ligand>
        <name>NAD(+)</name>
        <dbReference type="ChEBI" id="CHEBI:57540"/>
    </ligand>
</feature>
<feature type="binding site" evidence="1">
    <location>
        <position position="143"/>
    </location>
    <ligand>
        <name>NAD(+)</name>
        <dbReference type="ChEBI" id="CHEBI:57540"/>
    </ligand>
</feature>
<feature type="binding site" evidence="1">
    <location>
        <position position="152"/>
    </location>
    <ligand>
        <name>NAD(+)</name>
        <dbReference type="ChEBI" id="CHEBI:57540"/>
    </ligand>
</feature>
<feature type="binding site" evidence="1">
    <location>
        <position position="185"/>
    </location>
    <ligand>
        <name>Zn(2+)</name>
        <dbReference type="ChEBI" id="CHEBI:29105"/>
    </ligand>
</feature>
<feature type="binding site" evidence="1">
    <location>
        <position position="246"/>
    </location>
    <ligand>
        <name>Zn(2+)</name>
        <dbReference type="ChEBI" id="CHEBI:29105"/>
    </ligand>
</feature>
<feature type="binding site" evidence="1">
    <location>
        <position position="263"/>
    </location>
    <ligand>
        <name>Zn(2+)</name>
        <dbReference type="ChEBI" id="CHEBI:29105"/>
    </ligand>
</feature>